<comment type="function">
    <text evidence="1">Catalyzes the formation of acetyl phosphate from acetate and ATP. Can also catalyze the reverse reaction.</text>
</comment>
<comment type="catalytic activity">
    <reaction evidence="1">
        <text>acetate + ATP = acetyl phosphate + ADP</text>
        <dbReference type="Rhea" id="RHEA:11352"/>
        <dbReference type="ChEBI" id="CHEBI:22191"/>
        <dbReference type="ChEBI" id="CHEBI:30089"/>
        <dbReference type="ChEBI" id="CHEBI:30616"/>
        <dbReference type="ChEBI" id="CHEBI:456216"/>
        <dbReference type="EC" id="2.7.2.1"/>
    </reaction>
</comment>
<comment type="cofactor">
    <cofactor evidence="1">
        <name>Mg(2+)</name>
        <dbReference type="ChEBI" id="CHEBI:18420"/>
    </cofactor>
    <cofactor evidence="1">
        <name>Mn(2+)</name>
        <dbReference type="ChEBI" id="CHEBI:29035"/>
    </cofactor>
    <text evidence="1">Mg(2+). Can also accept Mn(2+).</text>
</comment>
<comment type="pathway">
    <text evidence="1">Metabolic intermediate biosynthesis; acetyl-CoA biosynthesis; acetyl-CoA from acetate: step 1/2.</text>
</comment>
<comment type="subunit">
    <text evidence="1">Homodimer.</text>
</comment>
<comment type="subcellular location">
    <subcellularLocation>
        <location evidence="1">Cytoplasm</location>
    </subcellularLocation>
</comment>
<comment type="similarity">
    <text evidence="1">Belongs to the acetokinase family.</text>
</comment>
<sequence>MKVLVLNCGSSSVKYQVFDMKNESVLAKGLAERIGLEGSRIVYQRGSEAKKVFEIPLPTHKKAIEEIFKLLVDKNNGVLQSLNEIDAVGHRVVHGGDKFVESVLVNDEVYSIFKGILDLAPLHNPYNLQGVDACSELMPGVPQVLVFDTSFHQTMPEEAYIYALPYEWYEKYKIRRYGFHGTSHYYVSRRVAELIGRPVEELKIISCHLGNGASITAIKNGKSIDTSMGYTPLEGLVMGTRCGDIDPAIPILLMEKENLTPKQMDEILNKKSGILGISGVSSDFRDVGEAAEKGNKRAELALKVFAYRVKKYIGAYYAILGGLDVLVFTAGVGERGPLERSLICSGLEHLGIKLDPEKNKVKGEELRISAPDSKVEVWVIPTNEELMIARETVRVVGEKIIKKVI</sequence>
<gene>
    <name evidence="1" type="primary">ackA</name>
    <name type="ordered locus">Dtur_0938</name>
</gene>
<protein>
    <recommendedName>
        <fullName evidence="1">Acetate kinase</fullName>
        <ecNumber evidence="1">2.7.2.1</ecNumber>
    </recommendedName>
    <alternativeName>
        <fullName evidence="1">Acetokinase</fullName>
    </alternativeName>
</protein>
<dbReference type="EC" id="2.7.2.1" evidence="1"/>
<dbReference type="EMBL" id="CP001251">
    <property type="protein sequence ID" value="ACK42219.1"/>
    <property type="molecule type" value="Genomic_DNA"/>
</dbReference>
<dbReference type="RefSeq" id="WP_012583303.1">
    <property type="nucleotide sequence ID" value="NC_011661.1"/>
</dbReference>
<dbReference type="RefSeq" id="YP_002352833.1">
    <property type="nucleotide sequence ID" value="NC_011661.1"/>
</dbReference>
<dbReference type="SMR" id="B8E191"/>
<dbReference type="FunCoup" id="B8E191">
    <property type="interactions" value="297"/>
</dbReference>
<dbReference type="STRING" id="515635.Dtur_0938"/>
<dbReference type="EnsemblBacteria" id="ACK42219">
    <property type="protein sequence ID" value="ACK42219"/>
    <property type="gene ID" value="Dtur_0938"/>
</dbReference>
<dbReference type="KEGG" id="dtu:Dtur_0938"/>
<dbReference type="PATRIC" id="fig|515635.4.peg.975"/>
<dbReference type="eggNOG" id="COG0282">
    <property type="taxonomic scope" value="Bacteria"/>
</dbReference>
<dbReference type="HOGENOM" id="CLU_020352_0_1_0"/>
<dbReference type="InParanoid" id="B8E191"/>
<dbReference type="OrthoDB" id="9802453at2"/>
<dbReference type="UniPathway" id="UPA00340">
    <property type="reaction ID" value="UER00458"/>
</dbReference>
<dbReference type="Proteomes" id="UP000007719">
    <property type="component" value="Chromosome"/>
</dbReference>
<dbReference type="GO" id="GO:0005737">
    <property type="term" value="C:cytoplasm"/>
    <property type="evidence" value="ECO:0007669"/>
    <property type="project" value="UniProtKB-SubCell"/>
</dbReference>
<dbReference type="GO" id="GO:0008776">
    <property type="term" value="F:acetate kinase activity"/>
    <property type="evidence" value="ECO:0000318"/>
    <property type="project" value="GO_Central"/>
</dbReference>
<dbReference type="GO" id="GO:0005524">
    <property type="term" value="F:ATP binding"/>
    <property type="evidence" value="ECO:0007669"/>
    <property type="project" value="UniProtKB-KW"/>
</dbReference>
<dbReference type="GO" id="GO:0000287">
    <property type="term" value="F:magnesium ion binding"/>
    <property type="evidence" value="ECO:0007669"/>
    <property type="project" value="UniProtKB-UniRule"/>
</dbReference>
<dbReference type="GO" id="GO:0006083">
    <property type="term" value="P:acetate metabolic process"/>
    <property type="evidence" value="ECO:0000318"/>
    <property type="project" value="GO_Central"/>
</dbReference>
<dbReference type="GO" id="GO:0006085">
    <property type="term" value="P:acetyl-CoA biosynthetic process"/>
    <property type="evidence" value="ECO:0007669"/>
    <property type="project" value="UniProtKB-UniRule"/>
</dbReference>
<dbReference type="CDD" id="cd24010">
    <property type="entry name" value="ASKHA_NBD_AcK_PK"/>
    <property type="match status" value="1"/>
</dbReference>
<dbReference type="Gene3D" id="3.30.420.40">
    <property type="match status" value="2"/>
</dbReference>
<dbReference type="HAMAP" id="MF_00020">
    <property type="entry name" value="Acetate_kinase"/>
    <property type="match status" value="1"/>
</dbReference>
<dbReference type="InterPro" id="IPR004372">
    <property type="entry name" value="Ac/propionate_kinase"/>
</dbReference>
<dbReference type="InterPro" id="IPR000890">
    <property type="entry name" value="Aliphatic_acid_kin_short-chain"/>
</dbReference>
<dbReference type="InterPro" id="IPR023865">
    <property type="entry name" value="Aliphatic_acid_kinase_CS"/>
</dbReference>
<dbReference type="InterPro" id="IPR043129">
    <property type="entry name" value="ATPase_NBD"/>
</dbReference>
<dbReference type="NCBIfam" id="TIGR00016">
    <property type="entry name" value="ackA"/>
    <property type="match status" value="1"/>
</dbReference>
<dbReference type="PANTHER" id="PTHR21060">
    <property type="entry name" value="ACETATE KINASE"/>
    <property type="match status" value="1"/>
</dbReference>
<dbReference type="PANTHER" id="PTHR21060:SF15">
    <property type="entry name" value="ACETATE KINASE-RELATED"/>
    <property type="match status" value="1"/>
</dbReference>
<dbReference type="Pfam" id="PF00871">
    <property type="entry name" value="Acetate_kinase"/>
    <property type="match status" value="1"/>
</dbReference>
<dbReference type="PIRSF" id="PIRSF000722">
    <property type="entry name" value="Acetate_prop_kin"/>
    <property type="match status" value="1"/>
</dbReference>
<dbReference type="PRINTS" id="PR00471">
    <property type="entry name" value="ACETATEKNASE"/>
</dbReference>
<dbReference type="SUPFAM" id="SSF53067">
    <property type="entry name" value="Actin-like ATPase domain"/>
    <property type="match status" value="2"/>
</dbReference>
<dbReference type="PROSITE" id="PS01075">
    <property type="entry name" value="ACETATE_KINASE_1"/>
    <property type="match status" value="1"/>
</dbReference>
<dbReference type="PROSITE" id="PS01076">
    <property type="entry name" value="ACETATE_KINASE_2"/>
    <property type="match status" value="1"/>
</dbReference>
<evidence type="ECO:0000255" key="1">
    <source>
        <dbReference type="HAMAP-Rule" id="MF_00020"/>
    </source>
</evidence>
<name>ACKA_DICTD</name>
<accession>B8E191</accession>
<feature type="chain" id="PRO_1000116390" description="Acetate kinase">
    <location>
        <begin position="1"/>
        <end position="405"/>
    </location>
</feature>
<feature type="active site" description="Proton donor/acceptor" evidence="1">
    <location>
        <position position="148"/>
    </location>
</feature>
<feature type="binding site" evidence="1">
    <location>
        <position position="7"/>
    </location>
    <ligand>
        <name>Mg(2+)</name>
        <dbReference type="ChEBI" id="CHEBI:18420"/>
    </ligand>
</feature>
<feature type="binding site" evidence="1">
    <location>
        <position position="14"/>
    </location>
    <ligand>
        <name>ATP</name>
        <dbReference type="ChEBI" id="CHEBI:30616"/>
    </ligand>
</feature>
<feature type="binding site" evidence="1">
    <location>
        <position position="91"/>
    </location>
    <ligand>
        <name>substrate</name>
    </ligand>
</feature>
<feature type="binding site" evidence="1">
    <location>
        <begin position="208"/>
        <end position="212"/>
    </location>
    <ligand>
        <name>ATP</name>
        <dbReference type="ChEBI" id="CHEBI:30616"/>
    </ligand>
</feature>
<feature type="binding site" evidence="1">
    <location>
        <begin position="283"/>
        <end position="285"/>
    </location>
    <ligand>
        <name>ATP</name>
        <dbReference type="ChEBI" id="CHEBI:30616"/>
    </ligand>
</feature>
<feature type="binding site" evidence="1">
    <location>
        <position position="384"/>
    </location>
    <ligand>
        <name>Mg(2+)</name>
        <dbReference type="ChEBI" id="CHEBI:18420"/>
    </ligand>
</feature>
<feature type="site" description="Transition state stabilizer" evidence="1">
    <location>
        <position position="180"/>
    </location>
</feature>
<feature type="site" description="Transition state stabilizer" evidence="1">
    <location>
        <position position="241"/>
    </location>
</feature>
<keyword id="KW-0067">ATP-binding</keyword>
<keyword id="KW-0963">Cytoplasm</keyword>
<keyword id="KW-0418">Kinase</keyword>
<keyword id="KW-0460">Magnesium</keyword>
<keyword id="KW-0479">Metal-binding</keyword>
<keyword id="KW-0547">Nucleotide-binding</keyword>
<keyword id="KW-1185">Reference proteome</keyword>
<keyword id="KW-0808">Transferase</keyword>
<proteinExistence type="inferred from homology"/>
<reference key="1">
    <citation type="journal article" date="2016" name="Front. Microbiol.">
        <title>The complete genome sequence of hyperthermophile Dictyoglomus turgidum DSM 6724 reveals a specialized carbohydrate fermentor.</title>
        <authorList>
            <person name="Brumm P.J."/>
            <person name="Gowda K."/>
            <person name="Robb F.T."/>
            <person name="Mead D.A."/>
        </authorList>
    </citation>
    <scope>NUCLEOTIDE SEQUENCE [LARGE SCALE GENOMIC DNA]</scope>
    <source>
        <strain>DSM 6724 / Z-1310</strain>
    </source>
</reference>
<organism>
    <name type="scientific">Dictyoglomus turgidum (strain DSM 6724 / Z-1310)</name>
    <dbReference type="NCBI Taxonomy" id="515635"/>
    <lineage>
        <taxon>Bacteria</taxon>
        <taxon>Pseudomonadati</taxon>
        <taxon>Dictyoglomota</taxon>
        <taxon>Dictyoglomia</taxon>
        <taxon>Dictyoglomales</taxon>
        <taxon>Dictyoglomaceae</taxon>
        <taxon>Dictyoglomus</taxon>
    </lineage>
</organism>